<gene>
    <name type="primary">FLOT3</name>
</gene>
<name>FLOT3_MEDTR</name>
<feature type="chain" id="PRO_0000395206" description="Flotillin-like protein 3">
    <location>
        <begin position="1"/>
        <end position="474"/>
    </location>
</feature>
<feature type="coiled-coil region" evidence="2">
    <location>
        <begin position="235"/>
        <end position="255"/>
    </location>
</feature>
<feature type="coiled-coil region" evidence="2">
    <location>
        <begin position="305"/>
        <end position="325"/>
    </location>
</feature>
<feature type="lipid moiety-binding region" description="S-palmitoyl cysteine" evidence="2">
    <location>
        <position position="35"/>
    </location>
</feature>
<reference key="1">
    <citation type="journal article" date="2010" name="Proc. Natl. Acad. Sci. U.S.A.">
        <title>Plant flotillins are required for infection by nitrogen-fixing bacteria.</title>
        <authorList>
            <person name="Haney C.H."/>
            <person name="Long S.R."/>
        </authorList>
    </citation>
    <scope>NUCLEOTIDE SEQUENCE [MRNA]</scope>
    <scope>INDUCTION</scope>
    <scope>TISSUE SPECIFICITY</scope>
</reference>
<organism>
    <name type="scientific">Medicago truncatula</name>
    <name type="common">Barrel medic</name>
    <name type="synonym">Medicago tribuloides</name>
    <dbReference type="NCBI Taxonomy" id="3880"/>
    <lineage>
        <taxon>Eukaryota</taxon>
        <taxon>Viridiplantae</taxon>
        <taxon>Streptophyta</taxon>
        <taxon>Embryophyta</taxon>
        <taxon>Tracheophyta</taxon>
        <taxon>Spermatophyta</taxon>
        <taxon>Magnoliopsida</taxon>
        <taxon>eudicotyledons</taxon>
        <taxon>Gunneridae</taxon>
        <taxon>Pentapetalae</taxon>
        <taxon>rosids</taxon>
        <taxon>fabids</taxon>
        <taxon>Fabales</taxon>
        <taxon>Fabaceae</taxon>
        <taxon>Papilionoideae</taxon>
        <taxon>50 kb inversion clade</taxon>
        <taxon>NPAAA clade</taxon>
        <taxon>Hologalegina</taxon>
        <taxon>IRL clade</taxon>
        <taxon>Trifolieae</taxon>
        <taxon>Medicago</taxon>
    </lineage>
</organism>
<comment type="function">
    <text evidence="1">May act as a scaffolding protein within caveolar membranes, functionally participating in formation of caveolae or caveolae-like vesicles (By similarity). May be involved in nodule formation.</text>
</comment>
<comment type="subcellular location">
    <subcellularLocation>
        <location evidence="4">Cell membrane</location>
        <topology evidence="4">Lipid-anchor</topology>
    </subcellularLocation>
    <subcellularLocation>
        <location evidence="1">Membrane</location>
        <location evidence="1">Caveola</location>
    </subcellularLocation>
</comment>
<comment type="tissue specificity">
    <text evidence="3">Expressed in all plant organs. Primarily expressed in vascular tissues. No change in spatial expression in root upon inoculation. Expression limited to the nodule vascular tissue.</text>
</comment>
<comment type="induction">
    <text evidence="3">Not induced during nodulation.</text>
</comment>
<comment type="PTM">
    <text evidence="4">May be palmitoylated.</text>
</comment>
<comment type="similarity">
    <text evidence="4">Belongs to the band 7/mec-2 family. Flotillin subfamily.</text>
</comment>
<sequence>MYRVAKASEYLAITGAGIDDIKLQKKAWIFPGQSCTVFDLSPVNYTFEVQAMSAEKLPFVLPAVFTIGPRVDDQESLLKYAKLISPHDRHSNHVNELVQGIIEGETRVLAASMTMEEVFRGTKQFKQEVFDKVQLELNQFGLLIYNANVKQLVDVPGHEYFSYLGQKTQMEAANQAKVDVAEAKMKGEIGSKLRVGQTLQNAAKIDAETKVIAMQRAGESEKQGIKVRTEVKVFENQREAEVAEANSELAKKKAAWTKAAQVAEVEAKKAVALREAELQGEVEKMNALTTTEKLKADLLSKASVQYETKVQEANWELYKKQKEAEAILFEKKAEAEAQKALADSTFYARKQEAEAELYAKKKEAEGIVTLGNAQGAYVSTLLNALGNNYTAVRDYLMINGGMFQEIAKINAEAVRGLEPKISIWTNGGDNSGGEGAMKEVAGVYKMLPPLFKTVHEQTGMLPPAWMGSLSDKSS</sequence>
<proteinExistence type="evidence at transcript level"/>
<keyword id="KW-1003">Cell membrane</keyword>
<keyword id="KW-0175">Coiled coil</keyword>
<keyword id="KW-0449">Lipoprotein</keyword>
<keyword id="KW-0472">Membrane</keyword>
<keyword id="KW-0536">Nodulation</keyword>
<keyword id="KW-0564">Palmitate</keyword>
<accession>D2XNR0</accession>
<evidence type="ECO:0000250" key="1"/>
<evidence type="ECO:0000255" key="2"/>
<evidence type="ECO:0000269" key="3">
    <source>
    </source>
</evidence>
<evidence type="ECO:0000305" key="4"/>
<protein>
    <recommendedName>
        <fullName>Flotillin-like protein 3</fullName>
    </recommendedName>
</protein>
<dbReference type="EMBL" id="GU224280">
    <property type="protein sequence ID" value="ADA83096.1"/>
    <property type="molecule type" value="mRNA"/>
</dbReference>
<dbReference type="SMR" id="D2XNR0"/>
<dbReference type="EnsemblPlants" id="rna19203">
    <property type="protein sequence ID" value="RHN70604.1"/>
    <property type="gene ID" value="gene19203"/>
</dbReference>
<dbReference type="GeneID" id="25490026"/>
<dbReference type="Gramene" id="rna19203">
    <property type="protein sequence ID" value="RHN70604.1"/>
    <property type="gene ID" value="gene19203"/>
</dbReference>
<dbReference type="KEGG" id="mtr:25490026"/>
<dbReference type="HOGENOM" id="CLU_030844_1_1_1"/>
<dbReference type="OrthoDB" id="6080404at2759"/>
<dbReference type="ExpressionAtlas" id="D2XNR0">
    <property type="expression patterns" value="differential"/>
</dbReference>
<dbReference type="GO" id="GO:0005901">
    <property type="term" value="C:caveola"/>
    <property type="evidence" value="ECO:0007669"/>
    <property type="project" value="UniProtKB-SubCell"/>
</dbReference>
<dbReference type="GO" id="GO:0009877">
    <property type="term" value="P:nodulation"/>
    <property type="evidence" value="ECO:0007669"/>
    <property type="project" value="UniProtKB-KW"/>
</dbReference>
<dbReference type="GO" id="GO:0048364">
    <property type="term" value="P:root development"/>
    <property type="evidence" value="ECO:0000315"/>
    <property type="project" value="UniProtKB"/>
</dbReference>
<dbReference type="CDD" id="cd03399">
    <property type="entry name" value="SPFH_flotillin"/>
    <property type="match status" value="1"/>
</dbReference>
<dbReference type="FunFam" id="3.30.479.30:FF:000015">
    <property type="entry name" value="Flotillin-like protein 2"/>
    <property type="match status" value="1"/>
</dbReference>
<dbReference type="Gene3D" id="3.30.479.30">
    <property type="entry name" value="Band 7 domain"/>
    <property type="match status" value="1"/>
</dbReference>
<dbReference type="InterPro" id="IPR001107">
    <property type="entry name" value="Band_7"/>
</dbReference>
<dbReference type="InterPro" id="IPR036013">
    <property type="entry name" value="Band_7/SPFH_dom_sf"/>
</dbReference>
<dbReference type="InterPro" id="IPR027705">
    <property type="entry name" value="Flotillin_fam"/>
</dbReference>
<dbReference type="PANTHER" id="PTHR13806:SF31">
    <property type="entry name" value="FLOTILLIN-LIKE PROTEIN 1-RELATED"/>
    <property type="match status" value="1"/>
</dbReference>
<dbReference type="PANTHER" id="PTHR13806">
    <property type="entry name" value="FLOTILLIN-RELATED"/>
    <property type="match status" value="1"/>
</dbReference>
<dbReference type="Pfam" id="PF01145">
    <property type="entry name" value="Band_7"/>
    <property type="match status" value="1"/>
</dbReference>
<dbReference type="SUPFAM" id="SSF117892">
    <property type="entry name" value="Band 7/SPFH domain"/>
    <property type="match status" value="1"/>
</dbReference>